<organism>
    <name type="scientific">Methanococcoides burtonii (strain DSM 6242 / NBRC 107633 / OCM 468 / ACE-M)</name>
    <dbReference type="NCBI Taxonomy" id="259564"/>
    <lineage>
        <taxon>Archaea</taxon>
        <taxon>Methanobacteriati</taxon>
        <taxon>Methanobacteriota</taxon>
        <taxon>Stenosarchaea group</taxon>
        <taxon>Methanomicrobia</taxon>
        <taxon>Methanosarcinales</taxon>
        <taxon>Methanosarcinaceae</taxon>
        <taxon>Methanococcoides</taxon>
    </lineage>
</organism>
<sequence length="353" mass="37564">MKYYLQKLIDGHDLSMVESEAAMGQILESATDAQVGAFVMGMKMKGETSDEVAGFAKGMLNVANMIRPKVDGILVDTCGTGGDRHNTINISTAAAIVAAAAGVTVAKHGNHSFTSLSGSADVFKELGVKIDLEPDLVKSSIEDIGIGFMLAPKFHPAMKRMVGPRKELAVRTMFNILGPLTNPTGAKAQVIGVFDKDLCNLMAEVLKKLGKEHVMVFHGDGMDEISTLSETFVAELKDGIISNYTLTPEELGVARAKATDIVGGTPEENAHDLLYILNGEKGAKRDIVVVNAAAAIYVAGLAISIKDAIPLAEEAIDSRKALNKLKELVEFTSGNKVDNEAFNTGQSLRNEVC</sequence>
<accession>Q12TL1</accession>
<comment type="function">
    <text evidence="1">Catalyzes the transfer of the phosphoribosyl group of 5-phosphorylribose-1-pyrophosphate (PRPP) to anthranilate to yield N-(5'-phosphoribosyl)-anthranilate (PRA).</text>
</comment>
<comment type="catalytic activity">
    <reaction evidence="1">
        <text>N-(5-phospho-beta-D-ribosyl)anthranilate + diphosphate = 5-phospho-alpha-D-ribose 1-diphosphate + anthranilate</text>
        <dbReference type="Rhea" id="RHEA:11768"/>
        <dbReference type="ChEBI" id="CHEBI:16567"/>
        <dbReference type="ChEBI" id="CHEBI:18277"/>
        <dbReference type="ChEBI" id="CHEBI:33019"/>
        <dbReference type="ChEBI" id="CHEBI:58017"/>
        <dbReference type="EC" id="2.4.2.18"/>
    </reaction>
</comment>
<comment type="cofactor">
    <cofactor evidence="1">
        <name>Mg(2+)</name>
        <dbReference type="ChEBI" id="CHEBI:18420"/>
    </cofactor>
    <text evidence="1">Binds 2 magnesium ions per monomer.</text>
</comment>
<comment type="pathway">
    <text evidence="1">Amino-acid biosynthesis; L-tryptophan biosynthesis; L-tryptophan from chorismate: step 2/5.</text>
</comment>
<comment type="subunit">
    <text evidence="1">Homodimer.</text>
</comment>
<comment type="similarity">
    <text evidence="1">Belongs to the anthranilate phosphoribosyltransferase family.</text>
</comment>
<proteinExistence type="inferred from homology"/>
<feature type="chain" id="PRO_1000043029" description="Anthranilate phosphoribosyltransferase">
    <location>
        <begin position="1"/>
        <end position="353"/>
    </location>
</feature>
<feature type="binding site" evidence="1">
    <location>
        <position position="79"/>
    </location>
    <ligand>
        <name>5-phospho-alpha-D-ribose 1-diphosphate</name>
        <dbReference type="ChEBI" id="CHEBI:58017"/>
    </ligand>
</feature>
<feature type="binding site" evidence="1">
    <location>
        <position position="79"/>
    </location>
    <ligand>
        <name>anthranilate</name>
        <dbReference type="ChEBI" id="CHEBI:16567"/>
        <label>1</label>
    </ligand>
</feature>
<feature type="binding site" evidence="1">
    <location>
        <begin position="82"/>
        <end position="83"/>
    </location>
    <ligand>
        <name>5-phospho-alpha-D-ribose 1-diphosphate</name>
        <dbReference type="ChEBI" id="CHEBI:58017"/>
    </ligand>
</feature>
<feature type="binding site" evidence="1">
    <location>
        <position position="87"/>
    </location>
    <ligand>
        <name>5-phospho-alpha-D-ribose 1-diphosphate</name>
        <dbReference type="ChEBI" id="CHEBI:58017"/>
    </ligand>
</feature>
<feature type="binding site" evidence="1">
    <location>
        <begin position="89"/>
        <end position="92"/>
    </location>
    <ligand>
        <name>5-phospho-alpha-D-ribose 1-diphosphate</name>
        <dbReference type="ChEBI" id="CHEBI:58017"/>
    </ligand>
</feature>
<feature type="binding site" evidence="1">
    <location>
        <position position="91"/>
    </location>
    <ligand>
        <name>Mg(2+)</name>
        <dbReference type="ChEBI" id="CHEBI:18420"/>
        <label>1</label>
    </ligand>
</feature>
<feature type="binding site" evidence="1">
    <location>
        <begin position="107"/>
        <end position="115"/>
    </location>
    <ligand>
        <name>5-phospho-alpha-D-ribose 1-diphosphate</name>
        <dbReference type="ChEBI" id="CHEBI:58017"/>
    </ligand>
</feature>
<feature type="binding site" evidence="1">
    <location>
        <position position="110"/>
    </location>
    <ligand>
        <name>anthranilate</name>
        <dbReference type="ChEBI" id="CHEBI:16567"/>
        <label>1</label>
    </ligand>
</feature>
<feature type="binding site" evidence="1">
    <location>
        <position position="119"/>
    </location>
    <ligand>
        <name>5-phospho-alpha-D-ribose 1-diphosphate</name>
        <dbReference type="ChEBI" id="CHEBI:58017"/>
    </ligand>
</feature>
<feature type="binding site" evidence="1">
    <location>
        <position position="165"/>
    </location>
    <ligand>
        <name>anthranilate</name>
        <dbReference type="ChEBI" id="CHEBI:16567"/>
        <label>2</label>
    </ligand>
</feature>
<feature type="binding site" evidence="1">
    <location>
        <position position="223"/>
    </location>
    <ligand>
        <name>Mg(2+)</name>
        <dbReference type="ChEBI" id="CHEBI:18420"/>
        <label>2</label>
    </ligand>
</feature>
<feature type="binding site" evidence="1">
    <location>
        <position position="224"/>
    </location>
    <ligand>
        <name>Mg(2+)</name>
        <dbReference type="ChEBI" id="CHEBI:18420"/>
        <label>1</label>
    </ligand>
</feature>
<feature type="binding site" evidence="1">
    <location>
        <position position="224"/>
    </location>
    <ligand>
        <name>Mg(2+)</name>
        <dbReference type="ChEBI" id="CHEBI:18420"/>
        <label>2</label>
    </ligand>
</feature>
<protein>
    <recommendedName>
        <fullName evidence="1">Anthranilate phosphoribosyltransferase</fullName>
        <ecNumber evidence="1">2.4.2.18</ecNumber>
    </recommendedName>
</protein>
<keyword id="KW-0028">Amino-acid biosynthesis</keyword>
<keyword id="KW-0057">Aromatic amino acid biosynthesis</keyword>
<keyword id="KW-0328">Glycosyltransferase</keyword>
<keyword id="KW-0460">Magnesium</keyword>
<keyword id="KW-0479">Metal-binding</keyword>
<keyword id="KW-0808">Transferase</keyword>
<keyword id="KW-0822">Tryptophan biosynthesis</keyword>
<evidence type="ECO:0000255" key="1">
    <source>
        <dbReference type="HAMAP-Rule" id="MF_00211"/>
    </source>
</evidence>
<gene>
    <name evidence="1" type="primary">trpD</name>
    <name type="ordered locus">Mbur_2363</name>
</gene>
<dbReference type="EC" id="2.4.2.18" evidence="1"/>
<dbReference type="EMBL" id="CP000300">
    <property type="protein sequence ID" value="ABE53215.1"/>
    <property type="molecule type" value="Genomic_DNA"/>
</dbReference>
<dbReference type="RefSeq" id="WP_011500350.1">
    <property type="nucleotide sequence ID" value="NC_007955.1"/>
</dbReference>
<dbReference type="SMR" id="Q12TL1"/>
<dbReference type="STRING" id="259564.Mbur_2363"/>
<dbReference type="GeneID" id="3998950"/>
<dbReference type="KEGG" id="mbu:Mbur_2363"/>
<dbReference type="HOGENOM" id="CLU_034315_2_1_2"/>
<dbReference type="OrthoDB" id="8214at2157"/>
<dbReference type="UniPathway" id="UPA00035">
    <property type="reaction ID" value="UER00041"/>
</dbReference>
<dbReference type="Proteomes" id="UP000001979">
    <property type="component" value="Chromosome"/>
</dbReference>
<dbReference type="GO" id="GO:0005829">
    <property type="term" value="C:cytosol"/>
    <property type="evidence" value="ECO:0007669"/>
    <property type="project" value="TreeGrafter"/>
</dbReference>
<dbReference type="GO" id="GO:0004048">
    <property type="term" value="F:anthranilate phosphoribosyltransferase activity"/>
    <property type="evidence" value="ECO:0007669"/>
    <property type="project" value="UniProtKB-UniRule"/>
</dbReference>
<dbReference type="GO" id="GO:0000287">
    <property type="term" value="F:magnesium ion binding"/>
    <property type="evidence" value="ECO:0007669"/>
    <property type="project" value="UniProtKB-UniRule"/>
</dbReference>
<dbReference type="GO" id="GO:0000162">
    <property type="term" value="P:L-tryptophan biosynthetic process"/>
    <property type="evidence" value="ECO:0007669"/>
    <property type="project" value="UniProtKB-UniRule"/>
</dbReference>
<dbReference type="FunFam" id="3.40.1030.10:FF:000002">
    <property type="entry name" value="Anthranilate phosphoribosyltransferase"/>
    <property type="match status" value="1"/>
</dbReference>
<dbReference type="Gene3D" id="3.40.1030.10">
    <property type="entry name" value="Nucleoside phosphorylase/phosphoribosyltransferase catalytic domain"/>
    <property type="match status" value="1"/>
</dbReference>
<dbReference type="Gene3D" id="1.20.970.10">
    <property type="entry name" value="Transferase, Pyrimidine Nucleoside Phosphorylase, Chain C"/>
    <property type="match status" value="1"/>
</dbReference>
<dbReference type="HAMAP" id="MF_00211">
    <property type="entry name" value="TrpD"/>
    <property type="match status" value="1"/>
</dbReference>
<dbReference type="InterPro" id="IPR005940">
    <property type="entry name" value="Anthranilate_Pribosyl_Tfrase"/>
</dbReference>
<dbReference type="InterPro" id="IPR000312">
    <property type="entry name" value="Glycosyl_Trfase_fam3"/>
</dbReference>
<dbReference type="InterPro" id="IPR017459">
    <property type="entry name" value="Glycosyl_Trfase_fam3_N_dom"/>
</dbReference>
<dbReference type="InterPro" id="IPR036320">
    <property type="entry name" value="Glycosyl_Trfase_fam3_N_dom_sf"/>
</dbReference>
<dbReference type="InterPro" id="IPR035902">
    <property type="entry name" value="Nuc_phospho_transferase"/>
</dbReference>
<dbReference type="NCBIfam" id="TIGR01245">
    <property type="entry name" value="trpD"/>
    <property type="match status" value="1"/>
</dbReference>
<dbReference type="PANTHER" id="PTHR43285">
    <property type="entry name" value="ANTHRANILATE PHOSPHORIBOSYLTRANSFERASE"/>
    <property type="match status" value="1"/>
</dbReference>
<dbReference type="PANTHER" id="PTHR43285:SF2">
    <property type="entry name" value="ANTHRANILATE PHOSPHORIBOSYLTRANSFERASE"/>
    <property type="match status" value="1"/>
</dbReference>
<dbReference type="Pfam" id="PF02885">
    <property type="entry name" value="Glycos_trans_3N"/>
    <property type="match status" value="1"/>
</dbReference>
<dbReference type="Pfam" id="PF00591">
    <property type="entry name" value="Glycos_transf_3"/>
    <property type="match status" value="1"/>
</dbReference>
<dbReference type="SUPFAM" id="SSF52418">
    <property type="entry name" value="Nucleoside phosphorylase/phosphoribosyltransferase catalytic domain"/>
    <property type="match status" value="1"/>
</dbReference>
<dbReference type="SUPFAM" id="SSF47648">
    <property type="entry name" value="Nucleoside phosphorylase/phosphoribosyltransferase N-terminal domain"/>
    <property type="match status" value="1"/>
</dbReference>
<name>TRPD_METBU</name>
<reference key="1">
    <citation type="journal article" date="2009" name="ISME J.">
        <title>The genome sequence of the psychrophilic archaeon, Methanococcoides burtonii: the role of genome evolution in cold adaptation.</title>
        <authorList>
            <person name="Allen M.A."/>
            <person name="Lauro F.M."/>
            <person name="Williams T.J."/>
            <person name="Burg D."/>
            <person name="Siddiqui K.S."/>
            <person name="De Francisci D."/>
            <person name="Chong K.W."/>
            <person name="Pilak O."/>
            <person name="Chew H.H."/>
            <person name="De Maere M.Z."/>
            <person name="Ting L."/>
            <person name="Katrib M."/>
            <person name="Ng C."/>
            <person name="Sowers K.R."/>
            <person name="Galperin M.Y."/>
            <person name="Anderson I.J."/>
            <person name="Ivanova N."/>
            <person name="Dalin E."/>
            <person name="Martinez M."/>
            <person name="Lapidus A."/>
            <person name="Hauser L."/>
            <person name="Land M."/>
            <person name="Thomas T."/>
            <person name="Cavicchioli R."/>
        </authorList>
    </citation>
    <scope>NUCLEOTIDE SEQUENCE [LARGE SCALE GENOMIC DNA]</scope>
    <source>
        <strain>DSM 6242 / NBRC 107633 / OCM 468 / ACE-M</strain>
    </source>
</reference>